<name>Y907_STAA8</name>
<comment type="subcellular location">
    <subcellularLocation>
        <location evidence="1">Cell membrane</location>
        <topology evidence="1">Multi-pass membrane protein</topology>
    </subcellularLocation>
</comment>
<comment type="similarity">
    <text evidence="1">Belongs to the UPF0344 family.</text>
</comment>
<protein>
    <recommendedName>
        <fullName evidence="1">UPF0344 protein SAOUHSC_00907</fullName>
    </recommendedName>
</protein>
<organism>
    <name type="scientific">Staphylococcus aureus (strain NCTC 8325 / PS 47)</name>
    <dbReference type="NCBI Taxonomy" id="93061"/>
    <lineage>
        <taxon>Bacteria</taxon>
        <taxon>Bacillati</taxon>
        <taxon>Bacillota</taxon>
        <taxon>Bacilli</taxon>
        <taxon>Bacillales</taxon>
        <taxon>Staphylococcaceae</taxon>
        <taxon>Staphylococcus</taxon>
    </lineage>
</organism>
<dbReference type="EMBL" id="CP000253">
    <property type="protein sequence ID" value="ABD30032.1"/>
    <property type="molecule type" value="Genomic_DNA"/>
</dbReference>
<dbReference type="RefSeq" id="WP_000902817.1">
    <property type="nucleotide sequence ID" value="NZ_LS483365.1"/>
</dbReference>
<dbReference type="RefSeq" id="YP_499460.1">
    <property type="nucleotide sequence ID" value="NC_007795.1"/>
</dbReference>
<dbReference type="SMR" id="Q2FZT3"/>
<dbReference type="STRING" id="93061.SAOUHSC_00907"/>
<dbReference type="PaxDb" id="1280-SAXN108_0964"/>
<dbReference type="GeneID" id="3921753"/>
<dbReference type="KEGG" id="sao:SAOUHSC_00907"/>
<dbReference type="PATRIC" id="fig|93061.5.peg.828"/>
<dbReference type="eggNOG" id="ENOG5033A1U">
    <property type="taxonomic scope" value="Bacteria"/>
</dbReference>
<dbReference type="HOGENOM" id="CLU_146641_2_0_9"/>
<dbReference type="OrthoDB" id="2365314at2"/>
<dbReference type="PRO" id="PR:Q2FZT3"/>
<dbReference type="Proteomes" id="UP000008816">
    <property type="component" value="Chromosome"/>
</dbReference>
<dbReference type="GO" id="GO:0005886">
    <property type="term" value="C:plasma membrane"/>
    <property type="evidence" value="ECO:0007669"/>
    <property type="project" value="UniProtKB-SubCell"/>
</dbReference>
<dbReference type="HAMAP" id="MF_01536">
    <property type="entry name" value="UPF0344"/>
    <property type="match status" value="1"/>
</dbReference>
<dbReference type="InterPro" id="IPR010899">
    <property type="entry name" value="UPF0344"/>
</dbReference>
<dbReference type="NCBIfam" id="NF010195">
    <property type="entry name" value="PRK13673.1-2"/>
    <property type="match status" value="1"/>
</dbReference>
<dbReference type="NCBIfam" id="NF010199">
    <property type="entry name" value="PRK13673.1-6"/>
    <property type="match status" value="1"/>
</dbReference>
<dbReference type="Pfam" id="PF07457">
    <property type="entry name" value="DUF1516"/>
    <property type="match status" value="1"/>
</dbReference>
<feature type="chain" id="PRO_1000068723" description="UPF0344 protein SAOUHSC_00907">
    <location>
        <begin position="1"/>
        <end position="129"/>
    </location>
</feature>
<feature type="transmembrane region" description="Helical" evidence="1">
    <location>
        <begin position="1"/>
        <end position="21"/>
    </location>
</feature>
<feature type="transmembrane region" description="Helical" evidence="1">
    <location>
        <begin position="36"/>
        <end position="56"/>
    </location>
</feature>
<feature type="transmembrane region" description="Helical" evidence="1">
    <location>
        <begin position="67"/>
        <end position="87"/>
    </location>
</feature>
<feature type="transmembrane region" description="Helical" evidence="1">
    <location>
        <begin position="99"/>
        <end position="119"/>
    </location>
</feature>
<reference key="1">
    <citation type="book" date="2006" name="Gram positive pathogens, 2nd edition">
        <title>The Staphylococcus aureus NCTC 8325 genome.</title>
        <editorList>
            <person name="Fischetti V."/>
            <person name="Novick R."/>
            <person name="Ferretti J."/>
            <person name="Portnoy D."/>
            <person name="Rood J."/>
        </editorList>
        <authorList>
            <person name="Gillaspy A.F."/>
            <person name="Worrell V."/>
            <person name="Orvis J."/>
            <person name="Roe B.A."/>
            <person name="Dyer D.W."/>
            <person name="Iandolo J.J."/>
        </authorList>
    </citation>
    <scope>NUCLEOTIDE SEQUENCE [LARGE SCALE GENOMIC DNA]</scope>
    <source>
        <strain>NCTC 8325 / PS 47</strain>
    </source>
</reference>
<keyword id="KW-1003">Cell membrane</keyword>
<keyword id="KW-0472">Membrane</keyword>
<keyword id="KW-1185">Reference proteome</keyword>
<keyword id="KW-0812">Transmembrane</keyword>
<keyword id="KW-1133">Transmembrane helix</keyword>
<sequence>MLHLHILSWVLAIILFIATYLNISKNQGRSPFFKPLHMILRLFMLLTLISGFWILIQSFMNGGANHMLLTLKMLCGVAVVGLMEVSIAKRKRHEQSHTMFWITIALIIITMVLGVILPLGPISKLFGIG</sequence>
<accession>Q2FZT3</accession>
<proteinExistence type="inferred from homology"/>
<evidence type="ECO:0000255" key="1">
    <source>
        <dbReference type="HAMAP-Rule" id="MF_01536"/>
    </source>
</evidence>
<gene>
    <name type="ordered locus">SAOUHSC_00907</name>
</gene>